<gene>
    <name evidence="1" type="primary">tus</name>
    <name type="ordered locus">SARI_01507</name>
</gene>
<sequence length="309" mass="35384">MSCYDLVERLNGTFRQIEQHLAALTDNLQQHSLLIARVFSLPQVTKEAEHAPLDTIEVTQHLGKEAETLALRHYRHLFIQQQSENRSSKAAVRLPGVLCYQVDNATQADLENQVQRINQLKTTFGQMVTVESGLPSAARFEWVHRYLPGLITLNAYRTLTLINNPATIRFGWANKHIIKNLSRDEVLSQLKKSLSSTRSVPPWTREQWQFKLEREYQDIAALPQQARLKIKRPVKVQPIARIWYKGQQKQVQHACPTPIIALINTDNGAGVPDIGGLENYDADNIQHRFKPQAQPMRLIIPRLHLYVAD</sequence>
<evidence type="ECO:0000255" key="1">
    <source>
        <dbReference type="HAMAP-Rule" id="MF_00483"/>
    </source>
</evidence>
<keyword id="KW-0963">Cytoplasm</keyword>
<keyword id="KW-0235">DNA replication</keyword>
<keyword id="KW-0238">DNA-binding</keyword>
<keyword id="KW-1185">Reference proteome</keyword>
<proteinExistence type="inferred from homology"/>
<comment type="function">
    <text evidence="1">Trans-acting protein required for termination of DNA replication. Binds to DNA replication terminator sequences (terA to terF) to prevent the passage of replication forks. The termination efficiency will be affected by the affinity of this protein for the terminator sequence.</text>
</comment>
<comment type="subcellular location">
    <subcellularLocation>
        <location evidence="1">Cytoplasm</location>
    </subcellularLocation>
</comment>
<comment type="similarity">
    <text evidence="1">Belongs to the Tus family.</text>
</comment>
<accession>A9MRV0</accession>
<organism>
    <name type="scientific">Salmonella arizonae (strain ATCC BAA-731 / CDC346-86 / RSK2980)</name>
    <dbReference type="NCBI Taxonomy" id="41514"/>
    <lineage>
        <taxon>Bacteria</taxon>
        <taxon>Pseudomonadati</taxon>
        <taxon>Pseudomonadota</taxon>
        <taxon>Gammaproteobacteria</taxon>
        <taxon>Enterobacterales</taxon>
        <taxon>Enterobacteriaceae</taxon>
        <taxon>Salmonella</taxon>
    </lineage>
</organism>
<feature type="chain" id="PRO_1000081316" description="DNA replication terminus site-binding protein">
    <location>
        <begin position="1"/>
        <end position="309"/>
    </location>
</feature>
<protein>
    <recommendedName>
        <fullName evidence="1">DNA replication terminus site-binding protein</fullName>
        <shortName evidence="1">Ter-binding protein</shortName>
    </recommendedName>
</protein>
<reference key="1">
    <citation type="submission" date="2007-11" db="EMBL/GenBank/DDBJ databases">
        <authorList>
            <consortium name="The Salmonella enterica serovar Arizonae Genome Sequencing Project"/>
            <person name="McClelland M."/>
            <person name="Sanderson E.K."/>
            <person name="Porwollik S."/>
            <person name="Spieth J."/>
            <person name="Clifton W.S."/>
            <person name="Fulton R."/>
            <person name="Chunyan W."/>
            <person name="Wollam A."/>
            <person name="Shah N."/>
            <person name="Pepin K."/>
            <person name="Bhonagiri V."/>
            <person name="Nash W."/>
            <person name="Johnson M."/>
            <person name="Thiruvilangam P."/>
            <person name="Wilson R."/>
        </authorList>
    </citation>
    <scope>NUCLEOTIDE SEQUENCE [LARGE SCALE GENOMIC DNA]</scope>
    <source>
        <strain>ATCC BAA-731 / CDC346-86 / RSK2980</strain>
    </source>
</reference>
<dbReference type="EMBL" id="CP000880">
    <property type="protein sequence ID" value="ABX21403.1"/>
    <property type="molecule type" value="Genomic_DNA"/>
</dbReference>
<dbReference type="SMR" id="A9MRV0"/>
<dbReference type="STRING" id="41514.SARI_01507"/>
<dbReference type="KEGG" id="ses:SARI_01507"/>
<dbReference type="HOGENOM" id="CLU_078181_0_0_6"/>
<dbReference type="Proteomes" id="UP000002084">
    <property type="component" value="Chromosome"/>
</dbReference>
<dbReference type="GO" id="GO:0005737">
    <property type="term" value="C:cytoplasm"/>
    <property type="evidence" value="ECO:0007669"/>
    <property type="project" value="UniProtKB-SubCell"/>
</dbReference>
<dbReference type="GO" id="GO:0003677">
    <property type="term" value="F:DNA binding"/>
    <property type="evidence" value="ECO:0007669"/>
    <property type="project" value="UniProtKB-UniRule"/>
</dbReference>
<dbReference type="GO" id="GO:0006274">
    <property type="term" value="P:DNA replication termination"/>
    <property type="evidence" value="ECO:0007669"/>
    <property type="project" value="UniProtKB-UniRule"/>
</dbReference>
<dbReference type="Gene3D" id="3.30.54.10">
    <property type="match status" value="1"/>
</dbReference>
<dbReference type="Gene3D" id="3.50.14.10">
    <property type="entry name" value="Replication terminator Tus, domain 1 superfamily/Replication terminator Tus"/>
    <property type="match status" value="1"/>
</dbReference>
<dbReference type="HAMAP" id="MF_00483">
    <property type="entry name" value="Rep_term_Tus"/>
    <property type="match status" value="1"/>
</dbReference>
<dbReference type="InterPro" id="IPR008865">
    <property type="entry name" value="DNA_replication_term_site-bd"/>
</dbReference>
<dbReference type="InterPro" id="IPR036381">
    <property type="entry name" value="Tus_dom1"/>
</dbReference>
<dbReference type="InterPro" id="IPR036384">
    <property type="entry name" value="Tus_sf"/>
</dbReference>
<dbReference type="NCBIfam" id="TIGR02648">
    <property type="entry name" value="rep_term_tus"/>
    <property type="match status" value="1"/>
</dbReference>
<dbReference type="Pfam" id="PF05472">
    <property type="entry name" value="Ter"/>
    <property type="match status" value="1"/>
</dbReference>
<dbReference type="SUPFAM" id="SSF56596">
    <property type="entry name" value="Replication terminator protein (Tus)"/>
    <property type="match status" value="1"/>
</dbReference>
<name>TUS_SALAR</name>